<reference key="1">
    <citation type="journal article" date="2007" name="BMC Microbiol.">
        <title>Subtle genetic changes enhance virulence of methicillin resistant and sensitive Staphylococcus aureus.</title>
        <authorList>
            <person name="Highlander S.K."/>
            <person name="Hulten K.G."/>
            <person name="Qin X."/>
            <person name="Jiang H."/>
            <person name="Yerrapragada S."/>
            <person name="Mason E.O. Jr."/>
            <person name="Shang Y."/>
            <person name="Williams T.M."/>
            <person name="Fortunov R.M."/>
            <person name="Liu Y."/>
            <person name="Igboeli O."/>
            <person name="Petrosino J."/>
            <person name="Tirumalai M."/>
            <person name="Uzman A."/>
            <person name="Fox G.E."/>
            <person name="Cardenas A.M."/>
            <person name="Muzny D.M."/>
            <person name="Hemphill L."/>
            <person name="Ding Y."/>
            <person name="Dugan S."/>
            <person name="Blyth P.R."/>
            <person name="Buhay C.J."/>
            <person name="Dinh H.H."/>
            <person name="Hawes A.C."/>
            <person name="Holder M."/>
            <person name="Kovar C.L."/>
            <person name="Lee S.L."/>
            <person name="Liu W."/>
            <person name="Nazareth L.V."/>
            <person name="Wang Q."/>
            <person name="Zhou J."/>
            <person name="Kaplan S.L."/>
            <person name="Weinstock G.M."/>
        </authorList>
    </citation>
    <scope>NUCLEOTIDE SEQUENCE [LARGE SCALE GENOMIC DNA]</scope>
    <source>
        <strain>USA300 / TCH1516</strain>
    </source>
</reference>
<gene>
    <name evidence="1" type="primary">dtd</name>
    <name type="ordered locus">USA300HOU_1631</name>
</gene>
<accession>A8Z2G0</accession>
<name>DTD_STAAT</name>
<sequence length="150" mass="16697">MKVVVQRVKEASVTNDTLNNQIKKGYCLLVGIGQNSTEQDADVIAKKIANARLFEDDNNKLNFNIQQMNGEILSVSQFTLYADVKKGNRPGFSNSKNPDQAVKIYEYFNDALRAYGLTVKTGEFGTHMNVSINNDGPVTIIYESQDGKIQ</sequence>
<evidence type="ECO:0000255" key="1">
    <source>
        <dbReference type="HAMAP-Rule" id="MF_00518"/>
    </source>
</evidence>
<protein>
    <recommendedName>
        <fullName evidence="1">D-aminoacyl-tRNA deacylase</fullName>
        <shortName evidence="1">DTD</shortName>
        <ecNumber evidence="1">3.1.1.96</ecNumber>
    </recommendedName>
    <alternativeName>
        <fullName evidence="1">Gly-tRNA(Ala) deacylase</fullName>
    </alternativeName>
</protein>
<dbReference type="EC" id="3.1.1.96" evidence="1"/>
<dbReference type="EMBL" id="CP000730">
    <property type="protein sequence ID" value="ABX29638.1"/>
    <property type="molecule type" value="Genomic_DNA"/>
</dbReference>
<dbReference type="RefSeq" id="WP_000869983.1">
    <property type="nucleotide sequence ID" value="NC_010079.1"/>
</dbReference>
<dbReference type="SMR" id="A8Z2G0"/>
<dbReference type="KEGG" id="sax:USA300HOU_1631"/>
<dbReference type="HOGENOM" id="CLU_076901_1_0_9"/>
<dbReference type="GO" id="GO:0005737">
    <property type="term" value="C:cytoplasm"/>
    <property type="evidence" value="ECO:0007669"/>
    <property type="project" value="UniProtKB-SubCell"/>
</dbReference>
<dbReference type="GO" id="GO:0051500">
    <property type="term" value="F:D-tyrosyl-tRNA(Tyr) deacylase activity"/>
    <property type="evidence" value="ECO:0007669"/>
    <property type="project" value="TreeGrafter"/>
</dbReference>
<dbReference type="GO" id="GO:0106026">
    <property type="term" value="F:Gly-tRNA(Ala) deacylase activity"/>
    <property type="evidence" value="ECO:0007669"/>
    <property type="project" value="UniProtKB-UniRule"/>
</dbReference>
<dbReference type="GO" id="GO:0043908">
    <property type="term" value="F:Ser(Gly)-tRNA(Ala) hydrolase activity"/>
    <property type="evidence" value="ECO:0007669"/>
    <property type="project" value="UniProtKB-UniRule"/>
</dbReference>
<dbReference type="GO" id="GO:0000049">
    <property type="term" value="F:tRNA binding"/>
    <property type="evidence" value="ECO:0007669"/>
    <property type="project" value="UniProtKB-UniRule"/>
</dbReference>
<dbReference type="GO" id="GO:0019478">
    <property type="term" value="P:D-amino acid catabolic process"/>
    <property type="evidence" value="ECO:0007669"/>
    <property type="project" value="UniProtKB-UniRule"/>
</dbReference>
<dbReference type="FunFam" id="3.50.80.10:FF:000005">
    <property type="entry name" value="D-aminoacyl-tRNA deacylase"/>
    <property type="match status" value="1"/>
</dbReference>
<dbReference type="Gene3D" id="3.50.80.10">
    <property type="entry name" value="D-tyrosyl-tRNA(Tyr) deacylase"/>
    <property type="match status" value="1"/>
</dbReference>
<dbReference type="HAMAP" id="MF_00518">
    <property type="entry name" value="Deacylase_Dtd"/>
    <property type="match status" value="1"/>
</dbReference>
<dbReference type="InterPro" id="IPR003732">
    <property type="entry name" value="Daa-tRNA_deacyls_DTD"/>
</dbReference>
<dbReference type="InterPro" id="IPR023509">
    <property type="entry name" value="DTD-like_sf"/>
</dbReference>
<dbReference type="NCBIfam" id="TIGR00256">
    <property type="entry name" value="D-aminoacyl-tRNA deacylase"/>
    <property type="match status" value="1"/>
</dbReference>
<dbReference type="PANTHER" id="PTHR10472:SF5">
    <property type="entry name" value="D-AMINOACYL-TRNA DEACYLASE 1"/>
    <property type="match status" value="1"/>
</dbReference>
<dbReference type="PANTHER" id="PTHR10472">
    <property type="entry name" value="D-TYROSYL-TRNA TYR DEACYLASE"/>
    <property type="match status" value="1"/>
</dbReference>
<dbReference type="Pfam" id="PF02580">
    <property type="entry name" value="Tyr_Deacylase"/>
    <property type="match status" value="1"/>
</dbReference>
<dbReference type="SUPFAM" id="SSF69500">
    <property type="entry name" value="DTD-like"/>
    <property type="match status" value="1"/>
</dbReference>
<organism>
    <name type="scientific">Staphylococcus aureus (strain USA300 / TCH1516)</name>
    <dbReference type="NCBI Taxonomy" id="451516"/>
    <lineage>
        <taxon>Bacteria</taxon>
        <taxon>Bacillati</taxon>
        <taxon>Bacillota</taxon>
        <taxon>Bacilli</taxon>
        <taxon>Bacillales</taxon>
        <taxon>Staphylococcaceae</taxon>
        <taxon>Staphylococcus</taxon>
    </lineage>
</organism>
<keyword id="KW-0963">Cytoplasm</keyword>
<keyword id="KW-0378">Hydrolase</keyword>
<keyword id="KW-0694">RNA-binding</keyword>
<keyword id="KW-0820">tRNA-binding</keyword>
<comment type="function">
    <text evidence="1">An aminoacyl-tRNA editing enzyme that deacylates mischarged D-aminoacyl-tRNAs. Also deacylates mischarged glycyl-tRNA(Ala), protecting cells against glycine mischarging by AlaRS. Acts via tRNA-based rather than protein-based catalysis; rejects L-amino acids rather than detecting D-amino acids in the active site. By recycling D-aminoacyl-tRNA to D-amino acids and free tRNA molecules, this enzyme counteracts the toxicity associated with the formation of D-aminoacyl-tRNA entities in vivo and helps enforce protein L-homochirality.</text>
</comment>
<comment type="catalytic activity">
    <reaction evidence="1">
        <text>glycyl-tRNA(Ala) + H2O = tRNA(Ala) + glycine + H(+)</text>
        <dbReference type="Rhea" id="RHEA:53744"/>
        <dbReference type="Rhea" id="RHEA-COMP:9657"/>
        <dbReference type="Rhea" id="RHEA-COMP:13640"/>
        <dbReference type="ChEBI" id="CHEBI:15377"/>
        <dbReference type="ChEBI" id="CHEBI:15378"/>
        <dbReference type="ChEBI" id="CHEBI:57305"/>
        <dbReference type="ChEBI" id="CHEBI:78442"/>
        <dbReference type="ChEBI" id="CHEBI:78522"/>
        <dbReference type="EC" id="3.1.1.96"/>
    </reaction>
</comment>
<comment type="catalytic activity">
    <reaction evidence="1">
        <text>a D-aminoacyl-tRNA + H2O = a tRNA + a D-alpha-amino acid + H(+)</text>
        <dbReference type="Rhea" id="RHEA:13953"/>
        <dbReference type="Rhea" id="RHEA-COMP:10123"/>
        <dbReference type="Rhea" id="RHEA-COMP:10124"/>
        <dbReference type="ChEBI" id="CHEBI:15377"/>
        <dbReference type="ChEBI" id="CHEBI:15378"/>
        <dbReference type="ChEBI" id="CHEBI:59871"/>
        <dbReference type="ChEBI" id="CHEBI:78442"/>
        <dbReference type="ChEBI" id="CHEBI:79333"/>
        <dbReference type="EC" id="3.1.1.96"/>
    </reaction>
</comment>
<comment type="subunit">
    <text evidence="1">Homodimer.</text>
</comment>
<comment type="subcellular location">
    <subcellularLocation>
        <location evidence="1">Cytoplasm</location>
    </subcellularLocation>
</comment>
<comment type="domain">
    <text evidence="1">A Gly-cisPro motif from one monomer fits into the active site of the other monomer to allow specific chiral rejection of L-amino acids.</text>
</comment>
<comment type="similarity">
    <text evidence="1">Belongs to the DTD family.</text>
</comment>
<feature type="chain" id="PRO_1000081672" description="D-aminoacyl-tRNA deacylase">
    <location>
        <begin position="1"/>
        <end position="150"/>
    </location>
</feature>
<feature type="short sequence motif" description="Gly-cisPro motif, important for rejection of L-amino acids" evidence="1">
    <location>
        <begin position="136"/>
        <end position="137"/>
    </location>
</feature>
<proteinExistence type="inferred from homology"/>